<keyword id="KW-0027">Amidation</keyword>
<keyword id="KW-0165">Cleavage on pair of basic residues</keyword>
<keyword id="KW-0903">Direct protein sequencing</keyword>
<keyword id="KW-0372">Hormone</keyword>
<keyword id="KW-0873">Pyrrolidone carboxylic acid</keyword>
<keyword id="KW-0964">Secreted</keyword>
<keyword id="KW-0732">Signal</keyword>
<dbReference type="EMBL" id="X78048">
    <property type="protein sequence ID" value="CAA54970.1"/>
    <property type="molecule type" value="mRNA"/>
</dbReference>
<dbReference type="EMBL" id="X78049">
    <property type="protein sequence ID" value="CAA54971.1"/>
    <property type="molecule type" value="mRNA"/>
</dbReference>
<dbReference type="PIR" id="S45602">
    <property type="entry name" value="RHID1S"/>
</dbReference>
<dbReference type="GO" id="GO:0005615">
    <property type="term" value="C:extracellular space"/>
    <property type="evidence" value="ECO:0000250"/>
    <property type="project" value="UniProtKB"/>
</dbReference>
<dbReference type="GO" id="GO:0005179">
    <property type="term" value="F:hormone activity"/>
    <property type="evidence" value="ECO:0007669"/>
    <property type="project" value="UniProtKB-KW"/>
</dbReference>
<dbReference type="InterPro" id="IPR002012">
    <property type="entry name" value="GnRH"/>
</dbReference>
<dbReference type="Pfam" id="PF00446">
    <property type="entry name" value="GnRH"/>
    <property type="match status" value="1"/>
</dbReference>
<dbReference type="PROSITE" id="PS00473">
    <property type="entry name" value="GNRH"/>
    <property type="match status" value="1"/>
</dbReference>
<feature type="signal peptide">
    <location>
        <begin position="1"/>
        <end position="21"/>
    </location>
</feature>
<feature type="chain" id="PRO_0000012426" description="Progonadoliberin-1">
    <location>
        <begin position="22"/>
        <end position="80"/>
    </location>
</feature>
<feature type="peptide" id="PRO_0000012427" description="Gonadoliberin-1" evidence="1">
    <location>
        <begin position="22"/>
        <end position="31"/>
    </location>
</feature>
<feature type="peptide" id="PRO_0000012428" description="GnRH-associated peptide 1">
    <location>
        <begin position="35"/>
        <end position="80"/>
    </location>
</feature>
<feature type="modified residue" description="Pyrrolidone carboxylic acid" evidence="1">
    <location>
        <position position="22"/>
    </location>
</feature>
<feature type="modified residue" description="Glycine amide" evidence="1">
    <location>
        <position position="31"/>
    </location>
</feature>
<feature type="sequence variant">
    <original>S</original>
    <variation>R</variation>
    <location>
        <position position="47"/>
    </location>
</feature>
<feature type="sequence variant">
    <original>G</original>
    <variation>R</variation>
    <location>
        <position position="60"/>
    </location>
</feature>
<reference key="1">
    <citation type="journal article" date="1994" name="Eur. J. Biochem.">
        <title>Isolation, characterization and expression of cDNAs encoding the catfish-type and chicken-II-type gonadotropin-releasing-hormone precursors in the African catfish.</title>
        <authorList>
            <person name="Bogerd J."/>
            <person name="Zandbergen T."/>
            <person name="Andersson E."/>
            <person name="Goos H."/>
        </authorList>
    </citation>
    <scope>NUCLEOTIDE SEQUENCE [MRNA]</scope>
    <source>
        <tissue>Brain</tissue>
    </source>
</reference>
<reference key="2">
    <citation type="journal article" date="1992" name="Biochem. Biophys. Res. Commun.">
        <title>Two gonadotropin-releasing hormones from African catfish (Clarias gariepinus).</title>
        <authorList>
            <person name="Bogerd J."/>
            <person name="Li K.W."/>
            <person name="Janssen-Dommerholt C."/>
            <person name="Goos H."/>
        </authorList>
    </citation>
    <scope>PROTEIN SEQUENCE OF 22-31</scope>
    <scope>PYROGLUTAMATE FORMATION AT GLN-22</scope>
    <scope>AMIDATION AT GLY-31</scope>
    <source>
        <tissue>Brain</tissue>
    </source>
</reference>
<comment type="function">
    <text>Stimulates the secretion of gonadotropins.</text>
</comment>
<comment type="subcellular location">
    <subcellularLocation>
        <location>Secreted</location>
    </subcellularLocation>
</comment>
<comment type="similarity">
    <text evidence="2">Belongs to the GnRH family.</text>
</comment>
<proteinExistence type="evidence at protein level"/>
<protein>
    <recommendedName>
        <fullName>Progonadoliberin-1</fullName>
    </recommendedName>
    <alternativeName>
        <fullName>Progonadoliberin I</fullName>
    </alternativeName>
    <component>
        <recommendedName>
            <fullName>Gonadoliberin-1</fullName>
        </recommendedName>
        <alternativeName>
            <fullName>Gonadoliberin I</fullName>
        </alternativeName>
        <alternativeName>
            <fullName>Gonadotropin-releasing hormone I</fullName>
            <shortName>GnRH-I</shortName>
        </alternativeName>
        <alternativeName>
            <fullName>Luliberin I</fullName>
        </alternativeName>
        <alternativeName>
            <fullName>Luteinizing hormone-releasing hormone I</fullName>
            <shortName>LH-RH I</shortName>
        </alternativeName>
    </component>
    <component>
        <recommendedName>
            <fullName>GnRH-associated peptide 1</fullName>
        </recommendedName>
        <alternativeName>
            <fullName>GnRH-associated peptide I</fullName>
        </alternativeName>
    </component>
</protein>
<evidence type="ECO:0000269" key="1">
    <source>
    </source>
</evidence>
<evidence type="ECO:0000305" key="2"/>
<name>GON1_CLAGA</name>
<gene>
    <name type="primary">gnrh1</name>
</gene>
<organism>
    <name type="scientific">Clarias gariepinus</name>
    <name type="common">North African catfish</name>
    <name type="synonym">Silurus gariepinus</name>
    <dbReference type="NCBI Taxonomy" id="13013"/>
    <lineage>
        <taxon>Eukaryota</taxon>
        <taxon>Metazoa</taxon>
        <taxon>Chordata</taxon>
        <taxon>Craniata</taxon>
        <taxon>Vertebrata</taxon>
        <taxon>Euteleostomi</taxon>
        <taxon>Actinopterygii</taxon>
        <taxon>Neopterygii</taxon>
        <taxon>Teleostei</taxon>
        <taxon>Ostariophysi</taxon>
        <taxon>Siluriformes</taxon>
        <taxon>Clariidae</taxon>
        <taxon>Clarias</taxon>
    </lineage>
</organism>
<accession>P33439</accession>
<sequence length="80" mass="8893">MGIKRALWWMVVCVVVLQVSAQHWSHGLNPGGKRAVMQESAEEIPRSSGYLCDYVAVSPGNKPFRLKDLLTPVAGREIEE</sequence>